<gene>
    <name type="primary">SK1</name>
    <name type="ordered locus">Os02g0749300</name>
    <name type="ordered locus">LOC_Os02g51410</name>
</gene>
<name>SK1_ORYSJ</name>
<accession>Q5NTH4</accession>
<accession>Q0DXJ9</accession>
<dbReference type="EC" id="2.7.1.71"/>
<dbReference type="EMBL" id="AB188834">
    <property type="protein sequence ID" value="BAD83412.1"/>
    <property type="molecule type" value="mRNA"/>
</dbReference>
<dbReference type="EMBL" id="AP005848">
    <property type="status" value="NOT_ANNOTATED_CDS"/>
    <property type="molecule type" value="Genomic_DNA"/>
</dbReference>
<dbReference type="EMBL" id="AP008208">
    <property type="protein sequence ID" value="BAF10039.1"/>
    <property type="status" value="ALT_SEQ"/>
    <property type="molecule type" value="Genomic_DNA"/>
</dbReference>
<dbReference type="EMBL" id="AP014958">
    <property type="status" value="NOT_ANNOTATED_CDS"/>
    <property type="molecule type" value="Genomic_DNA"/>
</dbReference>
<dbReference type="RefSeq" id="XP_015626759.1">
    <property type="nucleotide sequence ID" value="XM_015771273.1"/>
</dbReference>
<dbReference type="SMR" id="Q5NTH4"/>
<dbReference type="FunCoup" id="Q5NTH4">
    <property type="interactions" value="236"/>
</dbReference>
<dbReference type="STRING" id="39947.Q5NTH4"/>
<dbReference type="PaxDb" id="39947-Q5NTH4"/>
<dbReference type="EnsemblPlants" id="Os02t0749300-02">
    <property type="protein sequence ID" value="Os02t0749300-02"/>
    <property type="gene ID" value="Os02g0749300"/>
</dbReference>
<dbReference type="Gramene" id="Os02t0749300-02">
    <property type="protein sequence ID" value="Os02t0749300-02"/>
    <property type="gene ID" value="Os02g0749300"/>
</dbReference>
<dbReference type="KEGG" id="dosa:Os02g0749300"/>
<dbReference type="eggNOG" id="ENOG502QTKR">
    <property type="taxonomic scope" value="Eukaryota"/>
</dbReference>
<dbReference type="InParanoid" id="Q5NTH4"/>
<dbReference type="OrthoDB" id="197068at2759"/>
<dbReference type="BRENDA" id="2.7.1.71">
    <property type="organism ID" value="4460"/>
</dbReference>
<dbReference type="PlantReactome" id="R-OSA-1119430">
    <property type="pathway name" value="Chorismate biosynthesis"/>
</dbReference>
<dbReference type="UniPathway" id="UPA00053">
    <property type="reaction ID" value="UER00088"/>
</dbReference>
<dbReference type="Proteomes" id="UP000000763">
    <property type="component" value="Chromosome 2"/>
</dbReference>
<dbReference type="Proteomes" id="UP000059680">
    <property type="component" value="Chromosome 2"/>
</dbReference>
<dbReference type="GO" id="GO:0009507">
    <property type="term" value="C:chloroplast"/>
    <property type="evidence" value="ECO:0000314"/>
    <property type="project" value="UniProtKB"/>
</dbReference>
<dbReference type="GO" id="GO:0009536">
    <property type="term" value="C:plastid"/>
    <property type="evidence" value="ECO:0000314"/>
    <property type="project" value="Gramene"/>
</dbReference>
<dbReference type="GO" id="GO:0005524">
    <property type="term" value="F:ATP binding"/>
    <property type="evidence" value="ECO:0007669"/>
    <property type="project" value="UniProtKB-KW"/>
</dbReference>
<dbReference type="GO" id="GO:0046872">
    <property type="term" value="F:metal ion binding"/>
    <property type="evidence" value="ECO:0007669"/>
    <property type="project" value="UniProtKB-KW"/>
</dbReference>
<dbReference type="GO" id="GO:0004765">
    <property type="term" value="F:shikimate kinase activity"/>
    <property type="evidence" value="ECO:0000314"/>
    <property type="project" value="Gramene"/>
</dbReference>
<dbReference type="GO" id="GO:0008652">
    <property type="term" value="P:amino acid biosynthetic process"/>
    <property type="evidence" value="ECO:0007669"/>
    <property type="project" value="UniProtKB-KW"/>
</dbReference>
<dbReference type="GO" id="GO:0009073">
    <property type="term" value="P:aromatic amino acid family biosynthetic process"/>
    <property type="evidence" value="ECO:0000314"/>
    <property type="project" value="Gramene"/>
</dbReference>
<dbReference type="GO" id="GO:0009423">
    <property type="term" value="P:chorismate biosynthetic process"/>
    <property type="evidence" value="ECO:0007669"/>
    <property type="project" value="UniProtKB-UniPathway"/>
</dbReference>
<dbReference type="GO" id="GO:0019632">
    <property type="term" value="P:shikimate metabolic process"/>
    <property type="evidence" value="ECO:0000314"/>
    <property type="project" value="UniProtKB"/>
</dbReference>
<dbReference type="CDD" id="cd00464">
    <property type="entry name" value="SK"/>
    <property type="match status" value="1"/>
</dbReference>
<dbReference type="FunFam" id="3.40.50.300:FF:000822">
    <property type="entry name" value="Shikimate kinase, chloroplastic"/>
    <property type="match status" value="1"/>
</dbReference>
<dbReference type="Gene3D" id="3.40.50.300">
    <property type="entry name" value="P-loop containing nucleotide triphosphate hydrolases"/>
    <property type="match status" value="1"/>
</dbReference>
<dbReference type="HAMAP" id="MF_00109">
    <property type="entry name" value="Shikimate_kinase"/>
    <property type="match status" value="1"/>
</dbReference>
<dbReference type="InterPro" id="IPR027417">
    <property type="entry name" value="P-loop_NTPase"/>
</dbReference>
<dbReference type="InterPro" id="IPR031322">
    <property type="entry name" value="Shikimate/glucono_kinase"/>
</dbReference>
<dbReference type="InterPro" id="IPR000623">
    <property type="entry name" value="Shikimate_kinase/TSH1"/>
</dbReference>
<dbReference type="InterPro" id="IPR023000">
    <property type="entry name" value="Shikimate_kinase_CS"/>
</dbReference>
<dbReference type="PANTHER" id="PTHR21087">
    <property type="entry name" value="SHIKIMATE KINASE"/>
    <property type="match status" value="1"/>
</dbReference>
<dbReference type="PANTHER" id="PTHR21087:SF10">
    <property type="entry name" value="SHIKIMATE KINASE 1, CHLOROPLASTIC"/>
    <property type="match status" value="1"/>
</dbReference>
<dbReference type="Pfam" id="PF01202">
    <property type="entry name" value="SKI"/>
    <property type="match status" value="1"/>
</dbReference>
<dbReference type="PRINTS" id="PR01100">
    <property type="entry name" value="SHIKIMTKNASE"/>
</dbReference>
<dbReference type="SUPFAM" id="SSF52540">
    <property type="entry name" value="P-loop containing nucleoside triphosphate hydrolases"/>
    <property type="match status" value="1"/>
</dbReference>
<dbReference type="PROSITE" id="PS01128">
    <property type="entry name" value="SHIKIMATE_KINASE"/>
    <property type="match status" value="1"/>
</dbReference>
<evidence type="ECO:0000250" key="1"/>
<evidence type="ECO:0000255" key="2"/>
<evidence type="ECO:0000269" key="3">
    <source>
    </source>
</evidence>
<evidence type="ECO:0000305" key="4"/>
<evidence type="ECO:0000305" key="5">
    <source>
    </source>
</evidence>
<feature type="transit peptide" description="Chloroplast" evidence="2">
    <location>
        <begin position="1"/>
        <end position="62"/>
    </location>
</feature>
<feature type="chain" id="PRO_0000421113" description="Shikimate kinase 1, chloroplastic">
    <location>
        <begin position="63"/>
        <end position="308"/>
    </location>
</feature>
<feature type="binding site" evidence="1">
    <location>
        <begin position="103"/>
        <end position="110"/>
    </location>
    <ligand>
        <name>ATP</name>
        <dbReference type="ChEBI" id="CHEBI:30616"/>
    </ligand>
</feature>
<feature type="binding site" evidence="1">
    <location>
        <position position="110"/>
    </location>
    <ligand>
        <name>Mg(2+)</name>
        <dbReference type="ChEBI" id="CHEBI:18420"/>
    </ligand>
</feature>
<feature type="binding site" evidence="1">
    <location>
        <position position="128"/>
    </location>
    <ligand>
        <name>substrate</name>
    </ligand>
</feature>
<feature type="binding site" evidence="1">
    <location>
        <position position="153"/>
    </location>
    <ligand>
        <name>substrate</name>
    </ligand>
</feature>
<feature type="binding site" evidence="1">
    <location>
        <position position="175"/>
    </location>
    <ligand>
        <name>substrate</name>
    </ligand>
</feature>
<feature type="binding site" evidence="1">
    <location>
        <position position="214"/>
    </location>
    <ligand>
        <name>ATP</name>
        <dbReference type="ChEBI" id="CHEBI:30616"/>
    </ligand>
</feature>
<comment type="function">
    <text evidence="3">Catalyzes the specific phosphorylation of the 3-hydroxyl group of shikimic acid using ATP as a cosubstrate.</text>
</comment>
<comment type="catalytic activity">
    <reaction evidence="3">
        <text>shikimate + ATP = 3-phosphoshikimate + ADP + H(+)</text>
        <dbReference type="Rhea" id="RHEA:13121"/>
        <dbReference type="ChEBI" id="CHEBI:15378"/>
        <dbReference type="ChEBI" id="CHEBI:30616"/>
        <dbReference type="ChEBI" id="CHEBI:36208"/>
        <dbReference type="ChEBI" id="CHEBI:145989"/>
        <dbReference type="ChEBI" id="CHEBI:456216"/>
        <dbReference type="EC" id="2.7.1.71"/>
    </reaction>
</comment>
<comment type="cofactor">
    <cofactor evidence="1">
        <name>Mg(2+)</name>
        <dbReference type="ChEBI" id="CHEBI:18420"/>
    </cofactor>
    <text evidence="1">Binds 1 Mg(2+) ion per subunit.</text>
</comment>
<comment type="pathway">
    <text>Metabolic intermediate biosynthesis; chorismate biosynthesis; chorismate from D-erythrose 4-phosphate and phosphoenolpyruvate: step 5/7.</text>
</comment>
<comment type="subcellular location">
    <subcellularLocation>
        <location evidence="5">Plastid</location>
        <location evidence="5">Chloroplast</location>
    </subcellularLocation>
</comment>
<comment type="tissue specificity">
    <text evidence="3">Expressed in panicles.</text>
</comment>
<comment type="induction">
    <text evidence="3">By chitin oligosaccharide elicitor.</text>
</comment>
<comment type="similarity">
    <text evidence="4">Belongs to the shikimate kinase family.</text>
</comment>
<comment type="sequence caution" evidence="4">
    <conflict type="erroneous gene model prediction">
        <sequence resource="EMBL-CDS" id="BAF10039"/>
    </conflict>
</comment>
<reference key="1">
    <citation type="journal article" date="2005" name="Planta">
        <title>Identification of three shikimate kinase genes in rice: characterization of their differential expression during panicle development and of the enzymatic activities of the encoded proteins.</title>
        <authorList>
            <person name="Kasai K."/>
            <person name="Kanno T."/>
            <person name="Akita M."/>
            <person name="Ikejiri-Kanno Y."/>
            <person name="Wakasa K."/>
            <person name="Tozawa Y."/>
        </authorList>
    </citation>
    <scope>NUCLEOTIDE SEQUENCE [MRNA]</scope>
    <scope>FUNCTION</scope>
    <scope>CATALYTIC ACTIVITY</scope>
    <scope>SUBCELLULAR LOCATION</scope>
    <scope>TISSUE SPECIFICITY</scope>
    <scope>INDUCTION</scope>
    <source>
        <strain>cv. Nipponbare</strain>
    </source>
</reference>
<reference key="2">
    <citation type="journal article" date="2005" name="Nature">
        <title>The map-based sequence of the rice genome.</title>
        <authorList>
            <consortium name="International rice genome sequencing project (IRGSP)"/>
        </authorList>
    </citation>
    <scope>NUCLEOTIDE SEQUENCE [LARGE SCALE GENOMIC DNA]</scope>
    <source>
        <strain>cv. Nipponbare</strain>
    </source>
</reference>
<reference key="3">
    <citation type="journal article" date="2008" name="Nucleic Acids Res.">
        <title>The rice annotation project database (RAP-DB): 2008 update.</title>
        <authorList>
            <consortium name="The rice annotation project (RAP)"/>
        </authorList>
    </citation>
    <scope>GENOME REANNOTATION</scope>
    <source>
        <strain>cv. Nipponbare</strain>
    </source>
</reference>
<reference key="4">
    <citation type="journal article" date="2013" name="Rice">
        <title>Improvement of the Oryza sativa Nipponbare reference genome using next generation sequence and optical map data.</title>
        <authorList>
            <person name="Kawahara Y."/>
            <person name="de la Bastide M."/>
            <person name="Hamilton J.P."/>
            <person name="Kanamori H."/>
            <person name="McCombie W.R."/>
            <person name="Ouyang S."/>
            <person name="Schwartz D.C."/>
            <person name="Tanaka T."/>
            <person name="Wu J."/>
            <person name="Zhou S."/>
            <person name="Childs K.L."/>
            <person name="Davidson R.M."/>
            <person name="Lin H."/>
            <person name="Quesada-Ocampo L."/>
            <person name="Vaillancourt B."/>
            <person name="Sakai H."/>
            <person name="Lee S.S."/>
            <person name="Kim J."/>
            <person name="Numa H."/>
            <person name="Itoh T."/>
            <person name="Buell C.R."/>
            <person name="Matsumoto T."/>
        </authorList>
    </citation>
    <scope>GENOME REANNOTATION</scope>
    <source>
        <strain>cv. Nipponbare</strain>
    </source>
</reference>
<proteinExistence type="evidence at protein level"/>
<organism>
    <name type="scientific">Oryza sativa subsp. japonica</name>
    <name type="common">Rice</name>
    <dbReference type="NCBI Taxonomy" id="39947"/>
    <lineage>
        <taxon>Eukaryota</taxon>
        <taxon>Viridiplantae</taxon>
        <taxon>Streptophyta</taxon>
        <taxon>Embryophyta</taxon>
        <taxon>Tracheophyta</taxon>
        <taxon>Spermatophyta</taxon>
        <taxon>Magnoliopsida</taxon>
        <taxon>Liliopsida</taxon>
        <taxon>Poales</taxon>
        <taxon>Poaceae</taxon>
        <taxon>BOP clade</taxon>
        <taxon>Oryzoideae</taxon>
        <taxon>Oryzeae</taxon>
        <taxon>Oryzinae</taxon>
        <taxon>Oryza</taxon>
        <taxon>Oryza sativa</taxon>
    </lineage>
</organism>
<sequence length="308" mass="33310">MEAGVGLALQSRAAGFGGSDRRRSALYGGEGRARIGSLRVAEPAVAKAAVWARGSKPVAPLRAKKSSGGHETLHNSVDEALLLKRKSEEVLFYLNGRCIYLVGMMGSGKSTVGKIMSEVLGYSFFDSDKLVEQAVGMPSVAQIFKVHSEAFFRDNESSVLRDLSSMKRLVVATGGGAVIRPVNWKYMKKGLSVWLDVPLDALARRIAKVGTASRPLLDQPSGDPYTMAFSKLSMLAEQRGDAYANADVRVSLEEIASKQGHDDVSKLTPTDIAIESFHKIENFVIEHTVDNPVGDSQADSRAQRIQTL</sequence>
<keyword id="KW-0028">Amino-acid biosynthesis</keyword>
<keyword id="KW-0057">Aromatic amino acid biosynthesis</keyword>
<keyword id="KW-0067">ATP-binding</keyword>
<keyword id="KW-0150">Chloroplast</keyword>
<keyword id="KW-0418">Kinase</keyword>
<keyword id="KW-0460">Magnesium</keyword>
<keyword id="KW-0479">Metal-binding</keyword>
<keyword id="KW-0547">Nucleotide-binding</keyword>
<keyword id="KW-0934">Plastid</keyword>
<keyword id="KW-1185">Reference proteome</keyword>
<keyword id="KW-0808">Transferase</keyword>
<keyword id="KW-0809">Transit peptide</keyword>
<protein>
    <recommendedName>
        <fullName>Shikimate kinase 1, chloroplastic</fullName>
        <shortName>OsSK1</shortName>
        <ecNumber>2.7.1.71</ecNumber>
    </recommendedName>
</protein>